<name>YIDD_THET8</name>
<feature type="chain" id="PRO_0000253194" description="Putative membrane protein insertion efficiency factor">
    <location>
        <begin position="1"/>
        <end position="82"/>
    </location>
</feature>
<organism>
    <name type="scientific">Thermus thermophilus (strain ATCC 27634 / DSM 579 / HB8)</name>
    <dbReference type="NCBI Taxonomy" id="300852"/>
    <lineage>
        <taxon>Bacteria</taxon>
        <taxon>Thermotogati</taxon>
        <taxon>Deinococcota</taxon>
        <taxon>Deinococci</taxon>
        <taxon>Thermales</taxon>
        <taxon>Thermaceae</taxon>
        <taxon>Thermus</taxon>
    </lineage>
</organism>
<evidence type="ECO:0000255" key="1">
    <source>
        <dbReference type="HAMAP-Rule" id="MF_00386"/>
    </source>
</evidence>
<gene>
    <name type="ordered locus">TTHA0444</name>
</gene>
<keyword id="KW-0997">Cell inner membrane</keyword>
<keyword id="KW-1003">Cell membrane</keyword>
<keyword id="KW-0472">Membrane</keyword>
<keyword id="KW-1185">Reference proteome</keyword>
<proteinExistence type="inferred from homology"/>
<comment type="function">
    <text evidence="1">Could be involved in insertion of integral membrane proteins into the membrane.</text>
</comment>
<comment type="subcellular location">
    <subcellularLocation>
        <location evidence="1">Cell inner membrane</location>
        <topology evidence="1">Peripheral membrane protein</topology>
        <orientation evidence="1">Cytoplasmic side</orientation>
    </subcellularLocation>
</comment>
<comment type="similarity">
    <text evidence="1">Belongs to the UPF0161 family.</text>
</comment>
<sequence length="82" mass="9417">MREVLILLIRFYRRFLSPLKPRTCRFHPTCSAYALEALERHGAFWGSYLAVRRVLRCHPWNPGGLDPVPVLFPPGKVRGGAE</sequence>
<reference key="1">
    <citation type="submission" date="2004-11" db="EMBL/GenBank/DDBJ databases">
        <title>Complete genome sequence of Thermus thermophilus HB8.</title>
        <authorList>
            <person name="Masui R."/>
            <person name="Kurokawa K."/>
            <person name="Nakagawa N."/>
            <person name="Tokunaga F."/>
            <person name="Koyama Y."/>
            <person name="Shibata T."/>
            <person name="Oshima T."/>
            <person name="Yokoyama S."/>
            <person name="Yasunaga T."/>
            <person name="Kuramitsu S."/>
        </authorList>
    </citation>
    <scope>NUCLEOTIDE SEQUENCE [LARGE SCALE GENOMIC DNA]</scope>
    <source>
        <strain>ATCC 27634 / DSM 579 / HB8</strain>
    </source>
</reference>
<dbReference type="EMBL" id="AP008226">
    <property type="protein sequence ID" value="BAD70267.1"/>
    <property type="molecule type" value="Genomic_DNA"/>
</dbReference>
<dbReference type="RefSeq" id="YP_143710.1">
    <property type="nucleotide sequence ID" value="NC_006461.1"/>
</dbReference>
<dbReference type="EnsemblBacteria" id="BAD70267">
    <property type="protein sequence ID" value="BAD70267"/>
    <property type="gene ID" value="BAD70267"/>
</dbReference>
<dbReference type="GeneID" id="3170061"/>
<dbReference type="KEGG" id="ttj:TTHA0444"/>
<dbReference type="PATRIC" id="fig|300852.9.peg.443"/>
<dbReference type="eggNOG" id="COG0759">
    <property type="taxonomic scope" value="Bacteria"/>
</dbReference>
<dbReference type="HOGENOM" id="CLU_144811_6_0_0"/>
<dbReference type="PhylomeDB" id="Q5SL49"/>
<dbReference type="Proteomes" id="UP000000532">
    <property type="component" value="Chromosome"/>
</dbReference>
<dbReference type="GO" id="GO:0005886">
    <property type="term" value="C:plasma membrane"/>
    <property type="evidence" value="ECO:0007669"/>
    <property type="project" value="UniProtKB-SubCell"/>
</dbReference>
<dbReference type="HAMAP" id="MF_00386">
    <property type="entry name" value="UPF0161_YidD"/>
    <property type="match status" value="1"/>
</dbReference>
<dbReference type="InterPro" id="IPR002696">
    <property type="entry name" value="Membr_insert_effic_factor_YidD"/>
</dbReference>
<dbReference type="NCBIfam" id="TIGR00278">
    <property type="entry name" value="membrane protein insertion efficiency factor YidD"/>
    <property type="match status" value="1"/>
</dbReference>
<dbReference type="PANTHER" id="PTHR33383">
    <property type="entry name" value="MEMBRANE PROTEIN INSERTION EFFICIENCY FACTOR-RELATED"/>
    <property type="match status" value="1"/>
</dbReference>
<dbReference type="PANTHER" id="PTHR33383:SF1">
    <property type="entry name" value="MEMBRANE PROTEIN INSERTION EFFICIENCY FACTOR-RELATED"/>
    <property type="match status" value="1"/>
</dbReference>
<dbReference type="Pfam" id="PF01809">
    <property type="entry name" value="YidD"/>
    <property type="match status" value="1"/>
</dbReference>
<dbReference type="SMART" id="SM01234">
    <property type="entry name" value="Haemolytic"/>
    <property type="match status" value="1"/>
</dbReference>
<accession>Q5SL49</accession>
<protein>
    <recommendedName>
        <fullName evidence="1">Putative membrane protein insertion efficiency factor</fullName>
    </recommendedName>
</protein>